<dbReference type="EMBL" id="BA000018">
    <property type="protein sequence ID" value="BAB41676.1"/>
    <property type="molecule type" value="Genomic_DNA"/>
</dbReference>
<dbReference type="PIR" id="A89815">
    <property type="entry name" value="A89815"/>
</dbReference>
<dbReference type="RefSeq" id="WP_000377064.1">
    <property type="nucleotide sequence ID" value="NC_002745.2"/>
</dbReference>
<dbReference type="SMR" id="P67352"/>
<dbReference type="EnsemblBacteria" id="BAB41676">
    <property type="protein sequence ID" value="BAB41676"/>
    <property type="gene ID" value="BAB41676"/>
</dbReference>
<dbReference type="KEGG" id="sau:SA0446"/>
<dbReference type="HOGENOM" id="CLU_135650_0_3_9"/>
<dbReference type="CDD" id="cd10456">
    <property type="entry name" value="GIY-YIG_UPF0213"/>
    <property type="match status" value="1"/>
</dbReference>
<dbReference type="Gene3D" id="3.40.1440.10">
    <property type="entry name" value="GIY-YIG endonuclease"/>
    <property type="match status" value="1"/>
</dbReference>
<dbReference type="InterPro" id="IPR000305">
    <property type="entry name" value="GIY-YIG_endonuc"/>
</dbReference>
<dbReference type="InterPro" id="IPR035901">
    <property type="entry name" value="GIY-YIG_endonuc_sf"/>
</dbReference>
<dbReference type="InterPro" id="IPR050190">
    <property type="entry name" value="UPF0213_domain"/>
</dbReference>
<dbReference type="PANTHER" id="PTHR34477">
    <property type="entry name" value="UPF0213 PROTEIN YHBQ"/>
    <property type="match status" value="1"/>
</dbReference>
<dbReference type="PANTHER" id="PTHR34477:SF1">
    <property type="entry name" value="UPF0213 PROTEIN YHBQ"/>
    <property type="match status" value="1"/>
</dbReference>
<dbReference type="Pfam" id="PF01541">
    <property type="entry name" value="GIY-YIG"/>
    <property type="match status" value="1"/>
</dbReference>
<dbReference type="SMART" id="SM00465">
    <property type="entry name" value="GIYc"/>
    <property type="match status" value="1"/>
</dbReference>
<dbReference type="SUPFAM" id="SSF82771">
    <property type="entry name" value="GIY-YIG endonuclease"/>
    <property type="match status" value="1"/>
</dbReference>
<dbReference type="PROSITE" id="PS50164">
    <property type="entry name" value="GIY_YIG"/>
    <property type="match status" value="1"/>
</dbReference>
<evidence type="ECO:0000255" key="1">
    <source>
        <dbReference type="PROSITE-ProRule" id="PRU00977"/>
    </source>
</evidence>
<evidence type="ECO:0000305" key="2"/>
<reference key="1">
    <citation type="journal article" date="2001" name="Lancet">
        <title>Whole genome sequencing of meticillin-resistant Staphylococcus aureus.</title>
        <authorList>
            <person name="Kuroda M."/>
            <person name="Ohta T."/>
            <person name="Uchiyama I."/>
            <person name="Baba T."/>
            <person name="Yuzawa H."/>
            <person name="Kobayashi I."/>
            <person name="Cui L."/>
            <person name="Oguchi A."/>
            <person name="Aoki K."/>
            <person name="Nagai Y."/>
            <person name="Lian J.-Q."/>
            <person name="Ito T."/>
            <person name="Kanamori M."/>
            <person name="Matsumaru H."/>
            <person name="Maruyama A."/>
            <person name="Murakami H."/>
            <person name="Hosoyama A."/>
            <person name="Mizutani-Ui Y."/>
            <person name="Takahashi N.K."/>
            <person name="Sawano T."/>
            <person name="Inoue R."/>
            <person name="Kaito C."/>
            <person name="Sekimizu K."/>
            <person name="Hirakawa H."/>
            <person name="Kuhara S."/>
            <person name="Goto S."/>
            <person name="Yabuzaki J."/>
            <person name="Kanehisa M."/>
            <person name="Yamashita A."/>
            <person name="Oshima K."/>
            <person name="Furuya K."/>
            <person name="Yoshino C."/>
            <person name="Shiba T."/>
            <person name="Hattori M."/>
            <person name="Ogasawara N."/>
            <person name="Hayashi H."/>
            <person name="Hiramatsu K."/>
        </authorList>
    </citation>
    <scope>NUCLEOTIDE SEQUENCE [LARGE SCALE GENOMIC DNA]</scope>
    <source>
        <strain>N315</strain>
    </source>
</reference>
<protein>
    <recommendedName>
        <fullName>UPF0213 protein SA0446</fullName>
    </recommendedName>
</protein>
<feature type="chain" id="PRO_0000161382" description="UPF0213 protein SA0446">
    <location>
        <begin position="1"/>
        <end position="82"/>
    </location>
</feature>
<feature type="domain" description="GIY-YIG" evidence="1">
    <location>
        <begin position="2"/>
        <end position="77"/>
    </location>
</feature>
<comment type="similarity">
    <text evidence="2">Belongs to the UPF0213 family.</text>
</comment>
<sequence length="82" mass="9831">MDSHFVYIVKCSDGSLYTGYAKDVNARVEKHNRGQGAKYTKVRRPVHLVYQEMYETKSEALKREYEIKTYTRQKKLRLIKER</sequence>
<gene>
    <name type="ordered locus">SA0446</name>
</gene>
<name>Y446_STAAN</name>
<organism>
    <name type="scientific">Staphylococcus aureus (strain N315)</name>
    <dbReference type="NCBI Taxonomy" id="158879"/>
    <lineage>
        <taxon>Bacteria</taxon>
        <taxon>Bacillati</taxon>
        <taxon>Bacillota</taxon>
        <taxon>Bacilli</taxon>
        <taxon>Bacillales</taxon>
        <taxon>Staphylococcaceae</taxon>
        <taxon>Staphylococcus</taxon>
    </lineage>
</organism>
<proteinExistence type="inferred from homology"/>
<accession>P67352</accession>
<accession>Q99WB5</accession>